<dbReference type="EC" id="4.2.1.96" evidence="1"/>
<dbReference type="EMBL" id="AP006618">
    <property type="protein sequence ID" value="BAD59613.1"/>
    <property type="molecule type" value="Genomic_DNA"/>
</dbReference>
<dbReference type="RefSeq" id="WP_011211297.1">
    <property type="nucleotide sequence ID" value="NC_006361.1"/>
</dbReference>
<dbReference type="SMR" id="Q5YQC8"/>
<dbReference type="STRING" id="247156.NFA_47610"/>
<dbReference type="GeneID" id="61135358"/>
<dbReference type="KEGG" id="nfa:NFA_47610"/>
<dbReference type="eggNOG" id="COG2154">
    <property type="taxonomic scope" value="Bacteria"/>
</dbReference>
<dbReference type="HOGENOM" id="CLU_081974_4_3_11"/>
<dbReference type="OrthoDB" id="15077at2"/>
<dbReference type="Proteomes" id="UP000006820">
    <property type="component" value="Chromosome"/>
</dbReference>
<dbReference type="GO" id="GO:0008124">
    <property type="term" value="F:4-alpha-hydroxytetrahydrobiopterin dehydratase activity"/>
    <property type="evidence" value="ECO:0007669"/>
    <property type="project" value="UniProtKB-UniRule"/>
</dbReference>
<dbReference type="GO" id="GO:0006729">
    <property type="term" value="P:tetrahydrobiopterin biosynthetic process"/>
    <property type="evidence" value="ECO:0007669"/>
    <property type="project" value="InterPro"/>
</dbReference>
<dbReference type="CDD" id="cd00488">
    <property type="entry name" value="PCD_DCoH"/>
    <property type="match status" value="1"/>
</dbReference>
<dbReference type="Gene3D" id="3.30.1360.20">
    <property type="entry name" value="Transcriptional coactivator/pterin dehydratase"/>
    <property type="match status" value="1"/>
</dbReference>
<dbReference type="HAMAP" id="MF_00434">
    <property type="entry name" value="Pterin_4_alpha"/>
    <property type="match status" value="1"/>
</dbReference>
<dbReference type="InterPro" id="IPR036428">
    <property type="entry name" value="PCD_sf"/>
</dbReference>
<dbReference type="InterPro" id="IPR001533">
    <property type="entry name" value="Pterin_deHydtase"/>
</dbReference>
<dbReference type="NCBIfam" id="NF002017">
    <property type="entry name" value="PRK00823.1-2"/>
    <property type="match status" value="1"/>
</dbReference>
<dbReference type="PANTHER" id="PTHR12599">
    <property type="entry name" value="PTERIN-4-ALPHA-CARBINOLAMINE DEHYDRATASE"/>
    <property type="match status" value="1"/>
</dbReference>
<dbReference type="PANTHER" id="PTHR12599:SF0">
    <property type="entry name" value="PTERIN-4-ALPHA-CARBINOLAMINE DEHYDRATASE"/>
    <property type="match status" value="1"/>
</dbReference>
<dbReference type="Pfam" id="PF01329">
    <property type="entry name" value="Pterin_4a"/>
    <property type="match status" value="1"/>
</dbReference>
<dbReference type="SUPFAM" id="SSF55248">
    <property type="entry name" value="PCD-like"/>
    <property type="match status" value="1"/>
</dbReference>
<proteinExistence type="inferred from homology"/>
<sequence>MTTELLSDEQIATALQDLPDWTRSGDEISRTVQAESFPAAIALVDRVAEAAERAGHHPDIDIRWRTVTFTLSTHSAGGLTGRDIDLARQIDELAR</sequence>
<evidence type="ECO:0000255" key="1">
    <source>
        <dbReference type="HAMAP-Rule" id="MF_00434"/>
    </source>
</evidence>
<gene>
    <name type="ordered locus">NFA_47610</name>
</gene>
<organism>
    <name type="scientific">Nocardia farcinica (strain IFM 10152)</name>
    <dbReference type="NCBI Taxonomy" id="247156"/>
    <lineage>
        <taxon>Bacteria</taxon>
        <taxon>Bacillati</taxon>
        <taxon>Actinomycetota</taxon>
        <taxon>Actinomycetes</taxon>
        <taxon>Mycobacteriales</taxon>
        <taxon>Nocardiaceae</taxon>
        <taxon>Nocardia</taxon>
    </lineage>
</organism>
<accession>Q5YQC8</accession>
<feature type="chain" id="PRO_0000231457" description="Putative pterin-4-alpha-carbinolamine dehydratase">
    <location>
        <begin position="1"/>
        <end position="95"/>
    </location>
</feature>
<name>PHS_NOCFA</name>
<protein>
    <recommendedName>
        <fullName evidence="1">Putative pterin-4-alpha-carbinolamine dehydratase</fullName>
        <shortName evidence="1">PHS</shortName>
        <ecNumber evidence="1">4.2.1.96</ecNumber>
    </recommendedName>
    <alternativeName>
        <fullName evidence="1">4-alpha-hydroxy-tetrahydropterin dehydratase</fullName>
    </alternativeName>
    <alternativeName>
        <fullName evidence="1">Pterin carbinolamine dehydratase</fullName>
        <shortName evidence="1">PCD</shortName>
    </alternativeName>
</protein>
<keyword id="KW-0456">Lyase</keyword>
<keyword id="KW-1185">Reference proteome</keyword>
<reference key="1">
    <citation type="journal article" date="2004" name="Proc. Natl. Acad. Sci. U.S.A.">
        <title>The complete genomic sequence of Nocardia farcinica IFM 10152.</title>
        <authorList>
            <person name="Ishikawa J."/>
            <person name="Yamashita A."/>
            <person name="Mikami Y."/>
            <person name="Hoshino Y."/>
            <person name="Kurita H."/>
            <person name="Hotta K."/>
            <person name="Shiba T."/>
            <person name="Hattori M."/>
        </authorList>
    </citation>
    <scope>NUCLEOTIDE SEQUENCE [LARGE SCALE GENOMIC DNA]</scope>
    <source>
        <strain>IFM 10152</strain>
    </source>
</reference>
<comment type="catalytic activity">
    <reaction evidence="1">
        <text>(4aS,6R)-4a-hydroxy-L-erythro-5,6,7,8-tetrahydrobiopterin = (6R)-L-erythro-6,7-dihydrobiopterin + H2O</text>
        <dbReference type="Rhea" id="RHEA:11920"/>
        <dbReference type="ChEBI" id="CHEBI:15377"/>
        <dbReference type="ChEBI" id="CHEBI:15642"/>
        <dbReference type="ChEBI" id="CHEBI:43120"/>
        <dbReference type="EC" id="4.2.1.96"/>
    </reaction>
</comment>
<comment type="similarity">
    <text evidence="1">Belongs to the pterin-4-alpha-carbinolamine dehydratase family.</text>
</comment>